<organism>
    <name type="scientific">Schizosaccharomyces pombe (strain 972 / ATCC 24843)</name>
    <name type="common">Fission yeast</name>
    <dbReference type="NCBI Taxonomy" id="284812"/>
    <lineage>
        <taxon>Eukaryota</taxon>
        <taxon>Fungi</taxon>
        <taxon>Dikarya</taxon>
        <taxon>Ascomycota</taxon>
        <taxon>Taphrinomycotina</taxon>
        <taxon>Schizosaccharomycetes</taxon>
        <taxon>Schizosaccharomycetales</taxon>
        <taxon>Schizosaccharomycetaceae</taxon>
        <taxon>Schizosaccharomyces</taxon>
    </lineage>
</organism>
<protein>
    <recommendedName>
        <fullName>Uncharacterized protein C8E11.06</fullName>
    </recommendedName>
</protein>
<name>YFQ6_SCHPO</name>
<evidence type="ECO:0000269" key="1">
    <source>
    </source>
</evidence>
<gene>
    <name type="ORF">SPAC8E11.06</name>
</gene>
<proteinExistence type="predicted"/>
<accession>O42883</accession>
<comment type="subcellular location">
    <subcellularLocation>
        <location evidence="1">Cytoplasm</location>
    </subcellularLocation>
    <subcellularLocation>
        <location evidence="1">Nucleus</location>
    </subcellularLocation>
</comment>
<dbReference type="EMBL" id="CU329670">
    <property type="protein sequence ID" value="CAA17027.2"/>
    <property type="molecule type" value="Genomic_DNA"/>
</dbReference>
<dbReference type="PIR" id="T39160">
    <property type="entry name" value="T39160"/>
</dbReference>
<dbReference type="RefSeq" id="NP_594163.1">
    <property type="nucleotide sequence ID" value="NM_001019587.1"/>
</dbReference>
<dbReference type="BioGRID" id="279564">
    <property type="interactions" value="3"/>
</dbReference>
<dbReference type="STRING" id="284812.O42883"/>
<dbReference type="PaxDb" id="4896-SPAC8E11.06.1"/>
<dbReference type="EnsemblFungi" id="SPAC8E11.06.1">
    <property type="protein sequence ID" value="SPAC8E11.06.1:pep"/>
    <property type="gene ID" value="SPAC8E11.06"/>
</dbReference>
<dbReference type="KEGG" id="spo:2543132"/>
<dbReference type="PomBase" id="SPAC8E11.06"/>
<dbReference type="VEuPathDB" id="FungiDB:SPAC8E11.06"/>
<dbReference type="HOGENOM" id="CLU_3385032_0_0_1"/>
<dbReference type="InParanoid" id="O42883"/>
<dbReference type="PRO" id="PR:O42883"/>
<dbReference type="Proteomes" id="UP000002485">
    <property type="component" value="Chromosome I"/>
</dbReference>
<dbReference type="GO" id="GO:0005829">
    <property type="term" value="C:cytosol"/>
    <property type="evidence" value="ECO:0007005"/>
    <property type="project" value="PomBase"/>
</dbReference>
<dbReference type="GO" id="GO:0005634">
    <property type="term" value="C:nucleus"/>
    <property type="evidence" value="ECO:0007005"/>
    <property type="project" value="PomBase"/>
</dbReference>
<feature type="chain" id="PRO_0000304072" description="Uncharacterized protein C8E11.06">
    <location>
        <begin position="1"/>
        <end position="33"/>
    </location>
</feature>
<reference key="1">
    <citation type="journal article" date="2002" name="Nature">
        <title>The genome sequence of Schizosaccharomyces pombe.</title>
        <authorList>
            <person name="Wood V."/>
            <person name="Gwilliam R."/>
            <person name="Rajandream M.A."/>
            <person name="Lyne M.H."/>
            <person name="Lyne R."/>
            <person name="Stewart A."/>
            <person name="Sgouros J.G."/>
            <person name="Peat N."/>
            <person name="Hayles J."/>
            <person name="Baker S.G."/>
            <person name="Basham D."/>
            <person name="Bowman S."/>
            <person name="Brooks K."/>
            <person name="Brown D."/>
            <person name="Brown S."/>
            <person name="Chillingworth T."/>
            <person name="Churcher C.M."/>
            <person name="Collins M."/>
            <person name="Connor R."/>
            <person name="Cronin A."/>
            <person name="Davis P."/>
            <person name="Feltwell T."/>
            <person name="Fraser A."/>
            <person name="Gentles S."/>
            <person name="Goble A."/>
            <person name="Hamlin N."/>
            <person name="Harris D.E."/>
            <person name="Hidalgo J."/>
            <person name="Hodgson G."/>
            <person name="Holroyd S."/>
            <person name="Hornsby T."/>
            <person name="Howarth S."/>
            <person name="Huckle E.J."/>
            <person name="Hunt S."/>
            <person name="Jagels K."/>
            <person name="James K.D."/>
            <person name="Jones L."/>
            <person name="Jones M."/>
            <person name="Leather S."/>
            <person name="McDonald S."/>
            <person name="McLean J."/>
            <person name="Mooney P."/>
            <person name="Moule S."/>
            <person name="Mungall K.L."/>
            <person name="Murphy L.D."/>
            <person name="Niblett D."/>
            <person name="Odell C."/>
            <person name="Oliver K."/>
            <person name="O'Neil S."/>
            <person name="Pearson D."/>
            <person name="Quail M.A."/>
            <person name="Rabbinowitsch E."/>
            <person name="Rutherford K.M."/>
            <person name="Rutter S."/>
            <person name="Saunders D."/>
            <person name="Seeger K."/>
            <person name="Sharp S."/>
            <person name="Skelton J."/>
            <person name="Simmonds M.N."/>
            <person name="Squares R."/>
            <person name="Squares S."/>
            <person name="Stevens K."/>
            <person name="Taylor K."/>
            <person name="Taylor R.G."/>
            <person name="Tivey A."/>
            <person name="Walsh S.V."/>
            <person name="Warren T."/>
            <person name="Whitehead S."/>
            <person name="Woodward J.R."/>
            <person name="Volckaert G."/>
            <person name="Aert R."/>
            <person name="Robben J."/>
            <person name="Grymonprez B."/>
            <person name="Weltjens I."/>
            <person name="Vanstreels E."/>
            <person name="Rieger M."/>
            <person name="Schaefer M."/>
            <person name="Mueller-Auer S."/>
            <person name="Gabel C."/>
            <person name="Fuchs M."/>
            <person name="Duesterhoeft A."/>
            <person name="Fritzc C."/>
            <person name="Holzer E."/>
            <person name="Moestl D."/>
            <person name="Hilbert H."/>
            <person name="Borzym K."/>
            <person name="Langer I."/>
            <person name="Beck A."/>
            <person name="Lehrach H."/>
            <person name="Reinhardt R."/>
            <person name="Pohl T.M."/>
            <person name="Eger P."/>
            <person name="Zimmermann W."/>
            <person name="Wedler H."/>
            <person name="Wambutt R."/>
            <person name="Purnelle B."/>
            <person name="Goffeau A."/>
            <person name="Cadieu E."/>
            <person name="Dreano S."/>
            <person name="Gloux S."/>
            <person name="Lelaure V."/>
            <person name="Mottier S."/>
            <person name="Galibert F."/>
            <person name="Aves S.J."/>
            <person name="Xiang Z."/>
            <person name="Hunt C."/>
            <person name="Moore K."/>
            <person name="Hurst S.M."/>
            <person name="Lucas M."/>
            <person name="Rochet M."/>
            <person name="Gaillardin C."/>
            <person name="Tallada V.A."/>
            <person name="Garzon A."/>
            <person name="Thode G."/>
            <person name="Daga R.R."/>
            <person name="Cruzado L."/>
            <person name="Jimenez J."/>
            <person name="Sanchez M."/>
            <person name="del Rey F."/>
            <person name="Benito J."/>
            <person name="Dominguez A."/>
            <person name="Revuelta J.L."/>
            <person name="Moreno S."/>
            <person name="Armstrong J."/>
            <person name="Forsburg S.L."/>
            <person name="Cerutti L."/>
            <person name="Lowe T."/>
            <person name="McCombie W.R."/>
            <person name="Paulsen I."/>
            <person name="Potashkin J."/>
            <person name="Shpakovski G.V."/>
            <person name="Ussery D."/>
            <person name="Barrell B.G."/>
            <person name="Nurse P."/>
        </authorList>
    </citation>
    <scope>NUCLEOTIDE SEQUENCE [LARGE SCALE GENOMIC DNA]</scope>
    <source>
        <strain>972 / ATCC 24843</strain>
    </source>
</reference>
<reference key="2">
    <citation type="journal article" date="2006" name="Nat. Biotechnol.">
        <title>ORFeome cloning and global analysis of protein localization in the fission yeast Schizosaccharomyces pombe.</title>
        <authorList>
            <person name="Matsuyama A."/>
            <person name="Arai R."/>
            <person name="Yashiroda Y."/>
            <person name="Shirai A."/>
            <person name="Kamata A."/>
            <person name="Sekido S."/>
            <person name="Kobayashi Y."/>
            <person name="Hashimoto A."/>
            <person name="Hamamoto M."/>
            <person name="Hiraoka Y."/>
            <person name="Horinouchi S."/>
            <person name="Yoshida M."/>
        </authorList>
    </citation>
    <scope>SUBCELLULAR LOCATION [LARGE SCALE ANALYSIS]</scope>
</reference>
<keyword id="KW-0963">Cytoplasm</keyword>
<keyword id="KW-0539">Nucleus</keyword>
<keyword id="KW-1185">Reference proteome</keyword>
<sequence length="33" mass="3974">MLLVSRNICRIKGNTIDWRNLKKDLSMTWIILK</sequence>